<organism>
    <name type="scientific">Desulfitobacterium hafniense (strain Y51)</name>
    <dbReference type="NCBI Taxonomy" id="138119"/>
    <lineage>
        <taxon>Bacteria</taxon>
        <taxon>Bacillati</taxon>
        <taxon>Bacillota</taxon>
        <taxon>Clostridia</taxon>
        <taxon>Eubacteriales</taxon>
        <taxon>Desulfitobacteriaceae</taxon>
        <taxon>Desulfitobacterium</taxon>
    </lineage>
</organism>
<name>PLSY1_DESHY</name>
<protein>
    <recommendedName>
        <fullName evidence="1">Glycerol-3-phosphate acyltransferase 1</fullName>
    </recommendedName>
    <alternativeName>
        <fullName evidence="1">Acyl-PO4 G3P acyltransferase 1</fullName>
    </alternativeName>
    <alternativeName>
        <fullName evidence="1">Acyl-phosphate--glycerol-3-phosphate acyltransferase 1</fullName>
    </alternativeName>
    <alternativeName>
        <fullName evidence="1">G3P acyltransferase 1</fullName>
        <shortName evidence="1">GPAT 1</shortName>
        <ecNumber evidence="1">2.3.1.275</ecNumber>
    </alternativeName>
    <alternativeName>
        <fullName evidence="1">Lysophosphatidic acid synthase 1</fullName>
        <shortName evidence="1">LPA synthase 1</shortName>
    </alternativeName>
</protein>
<feature type="chain" id="PRO_0000250297" description="Glycerol-3-phosphate acyltransferase 1">
    <location>
        <begin position="1"/>
        <end position="202"/>
    </location>
</feature>
<feature type="transmembrane region" description="Helical" evidence="1">
    <location>
        <begin position="8"/>
        <end position="28"/>
    </location>
</feature>
<feature type="transmembrane region" description="Helical" evidence="1">
    <location>
        <begin position="85"/>
        <end position="105"/>
    </location>
</feature>
<feature type="transmembrane region" description="Helical" evidence="1">
    <location>
        <begin position="122"/>
        <end position="142"/>
    </location>
</feature>
<feature type="transmembrane region" description="Helical" evidence="1">
    <location>
        <begin position="146"/>
        <end position="166"/>
    </location>
</feature>
<feature type="transmembrane region" description="Helical" evidence="1">
    <location>
        <begin position="173"/>
        <end position="190"/>
    </location>
</feature>
<accession>Q24Y16</accession>
<sequence length="202" mass="21285">MKLASKEAGMIDLFMILGAYLLGGMSTGYYLVKLWRQEDVRNQGSGATGATNAGRVLGKKGFLLTLMGDALKGALAPALSMHFNLSLTTLILCLIAGVAGHIWPLQLGLRGGKGVAPALGGILVVDPMLASAAAGVFLFVLALTRQFTLSGLAAILGAPILSLIMARPFEQSAGLAVLAIFILLAHRKNIREMLNKSSQRRR</sequence>
<evidence type="ECO:0000255" key="1">
    <source>
        <dbReference type="HAMAP-Rule" id="MF_01043"/>
    </source>
</evidence>
<reference key="1">
    <citation type="journal article" date="2006" name="J. Bacteriol.">
        <title>Complete genome sequence of the dehalorespiring bacterium Desulfitobacterium hafniense Y51 and comparison with Dehalococcoides ethenogenes 195.</title>
        <authorList>
            <person name="Nonaka H."/>
            <person name="Keresztes G."/>
            <person name="Shinoda Y."/>
            <person name="Ikenaga Y."/>
            <person name="Abe M."/>
            <person name="Naito K."/>
            <person name="Inatomi K."/>
            <person name="Furukawa K."/>
            <person name="Inui M."/>
            <person name="Yukawa H."/>
        </authorList>
    </citation>
    <scope>NUCLEOTIDE SEQUENCE [LARGE SCALE GENOMIC DNA]</scope>
    <source>
        <strain>Y51</strain>
    </source>
</reference>
<proteinExistence type="inferred from homology"/>
<comment type="function">
    <text evidence="1">Catalyzes the transfer of an acyl group from acyl-phosphate (acyl-PO(4)) to glycerol-3-phosphate (G3P) to form lysophosphatidic acid (LPA). This enzyme utilizes acyl-phosphate as fatty acyl donor, but not acyl-CoA or acyl-ACP.</text>
</comment>
<comment type="catalytic activity">
    <reaction evidence="1">
        <text>an acyl phosphate + sn-glycerol 3-phosphate = a 1-acyl-sn-glycero-3-phosphate + phosphate</text>
        <dbReference type="Rhea" id="RHEA:34075"/>
        <dbReference type="ChEBI" id="CHEBI:43474"/>
        <dbReference type="ChEBI" id="CHEBI:57597"/>
        <dbReference type="ChEBI" id="CHEBI:57970"/>
        <dbReference type="ChEBI" id="CHEBI:59918"/>
        <dbReference type="EC" id="2.3.1.275"/>
    </reaction>
</comment>
<comment type="pathway">
    <text evidence="1">Lipid metabolism; phospholipid metabolism.</text>
</comment>
<comment type="subunit">
    <text evidence="1">Probably interacts with PlsX.</text>
</comment>
<comment type="subcellular location">
    <subcellularLocation>
        <location evidence="1">Cell membrane</location>
        <topology evidence="1">Multi-pass membrane protein</topology>
    </subcellularLocation>
</comment>
<comment type="similarity">
    <text evidence="1">Belongs to the PlsY family.</text>
</comment>
<gene>
    <name evidence="1" type="primary">plsY1</name>
    <name type="ordered locus">DSY1287</name>
</gene>
<keyword id="KW-1003">Cell membrane</keyword>
<keyword id="KW-0444">Lipid biosynthesis</keyword>
<keyword id="KW-0443">Lipid metabolism</keyword>
<keyword id="KW-0472">Membrane</keyword>
<keyword id="KW-0594">Phospholipid biosynthesis</keyword>
<keyword id="KW-1208">Phospholipid metabolism</keyword>
<keyword id="KW-1185">Reference proteome</keyword>
<keyword id="KW-0808">Transferase</keyword>
<keyword id="KW-0812">Transmembrane</keyword>
<keyword id="KW-1133">Transmembrane helix</keyword>
<dbReference type="EC" id="2.3.1.275" evidence="1"/>
<dbReference type="EMBL" id="AP008230">
    <property type="protein sequence ID" value="BAE83076.1"/>
    <property type="molecule type" value="Genomic_DNA"/>
</dbReference>
<dbReference type="SMR" id="Q24Y16"/>
<dbReference type="STRING" id="138119.DSY1287"/>
<dbReference type="KEGG" id="dsy:DSY1287"/>
<dbReference type="eggNOG" id="COG0344">
    <property type="taxonomic scope" value="Bacteria"/>
</dbReference>
<dbReference type="HOGENOM" id="CLU_081254_7_0_9"/>
<dbReference type="UniPathway" id="UPA00085"/>
<dbReference type="Proteomes" id="UP000001946">
    <property type="component" value="Chromosome"/>
</dbReference>
<dbReference type="GO" id="GO:0005886">
    <property type="term" value="C:plasma membrane"/>
    <property type="evidence" value="ECO:0007669"/>
    <property type="project" value="UniProtKB-SubCell"/>
</dbReference>
<dbReference type="GO" id="GO:0043772">
    <property type="term" value="F:acyl-phosphate glycerol-3-phosphate acyltransferase activity"/>
    <property type="evidence" value="ECO:0007669"/>
    <property type="project" value="UniProtKB-UniRule"/>
</dbReference>
<dbReference type="GO" id="GO:0008654">
    <property type="term" value="P:phospholipid biosynthetic process"/>
    <property type="evidence" value="ECO:0007669"/>
    <property type="project" value="UniProtKB-UniRule"/>
</dbReference>
<dbReference type="HAMAP" id="MF_01043">
    <property type="entry name" value="PlsY"/>
    <property type="match status" value="1"/>
</dbReference>
<dbReference type="InterPro" id="IPR003811">
    <property type="entry name" value="G3P_acylTferase_PlsY"/>
</dbReference>
<dbReference type="NCBIfam" id="TIGR00023">
    <property type="entry name" value="glycerol-3-phosphate 1-O-acyltransferase PlsY"/>
    <property type="match status" value="1"/>
</dbReference>
<dbReference type="PANTHER" id="PTHR30309:SF0">
    <property type="entry name" value="GLYCEROL-3-PHOSPHATE ACYLTRANSFERASE-RELATED"/>
    <property type="match status" value="1"/>
</dbReference>
<dbReference type="PANTHER" id="PTHR30309">
    <property type="entry name" value="INNER MEMBRANE PROTEIN YGIH"/>
    <property type="match status" value="1"/>
</dbReference>
<dbReference type="Pfam" id="PF02660">
    <property type="entry name" value="G3P_acyltransf"/>
    <property type="match status" value="1"/>
</dbReference>
<dbReference type="SMART" id="SM01207">
    <property type="entry name" value="G3P_acyltransf"/>
    <property type="match status" value="1"/>
</dbReference>